<comment type="function">
    <text evidence="1">NDH-1 shuttles electrons from NADH, via FMN and iron-sulfur (Fe-S) centers, to quinones in the respiratory chain. The immediate electron acceptor for the enzyme in this species is believed to be ubiquinone. Couples the redox reaction to proton translocation (for every two electrons transferred, four hydrogen ions are translocated across the cytoplasmic membrane), and thus conserves the redox energy in a proton gradient.</text>
</comment>
<comment type="catalytic activity">
    <reaction evidence="1">
        <text>a quinone + NADH + 5 H(+)(in) = a quinol + NAD(+) + 4 H(+)(out)</text>
        <dbReference type="Rhea" id="RHEA:57888"/>
        <dbReference type="ChEBI" id="CHEBI:15378"/>
        <dbReference type="ChEBI" id="CHEBI:24646"/>
        <dbReference type="ChEBI" id="CHEBI:57540"/>
        <dbReference type="ChEBI" id="CHEBI:57945"/>
        <dbReference type="ChEBI" id="CHEBI:132124"/>
    </reaction>
</comment>
<comment type="cofactor">
    <cofactor evidence="1">
        <name>[4Fe-4S] cluster</name>
        <dbReference type="ChEBI" id="CHEBI:49883"/>
    </cofactor>
    <text evidence="1">Binds 2 [4Fe-4S] clusters per subunit.</text>
</comment>
<comment type="subunit">
    <text evidence="1">NDH-1 is composed of 14 different subunits. Subunits NuoA, H, J, K, L, M, N constitute the membrane sector of the complex.</text>
</comment>
<comment type="subcellular location">
    <subcellularLocation>
        <location evidence="1">Cell inner membrane</location>
        <topology evidence="1">Peripheral membrane protein</topology>
    </subcellularLocation>
</comment>
<comment type="similarity">
    <text evidence="1">Belongs to the complex I 23 kDa subunit family.</text>
</comment>
<gene>
    <name evidence="1" type="primary">nuoI</name>
    <name type="ordered locus">Rmet_0935</name>
</gene>
<reference key="1">
    <citation type="journal article" date="2010" name="PLoS ONE">
        <title>The complete genome sequence of Cupriavidus metallidurans strain CH34, a master survivalist in harsh and anthropogenic environments.</title>
        <authorList>
            <person name="Janssen P.J."/>
            <person name="Van Houdt R."/>
            <person name="Moors H."/>
            <person name="Monsieurs P."/>
            <person name="Morin N."/>
            <person name="Michaux A."/>
            <person name="Benotmane M.A."/>
            <person name="Leys N."/>
            <person name="Vallaeys T."/>
            <person name="Lapidus A."/>
            <person name="Monchy S."/>
            <person name="Medigue C."/>
            <person name="Taghavi S."/>
            <person name="McCorkle S."/>
            <person name="Dunn J."/>
            <person name="van der Lelie D."/>
            <person name="Mergeay M."/>
        </authorList>
    </citation>
    <scope>NUCLEOTIDE SEQUENCE [LARGE SCALE GENOMIC DNA]</scope>
    <source>
        <strain>ATCC 43123 / DSM 2839 / NBRC 102507 / CH34</strain>
    </source>
</reference>
<protein>
    <recommendedName>
        <fullName evidence="1">NADH-quinone oxidoreductase subunit I</fullName>
        <ecNumber evidence="1">7.1.1.-</ecNumber>
    </recommendedName>
    <alternativeName>
        <fullName evidence="1">NADH dehydrogenase I subunit I</fullName>
    </alternativeName>
    <alternativeName>
        <fullName evidence="1">NDH-1 subunit I</fullName>
    </alternativeName>
</protein>
<organism>
    <name type="scientific">Cupriavidus metallidurans (strain ATCC 43123 / DSM 2839 / NBRC 102507 / CH34)</name>
    <name type="common">Ralstonia metallidurans</name>
    <dbReference type="NCBI Taxonomy" id="266264"/>
    <lineage>
        <taxon>Bacteria</taxon>
        <taxon>Pseudomonadati</taxon>
        <taxon>Pseudomonadota</taxon>
        <taxon>Betaproteobacteria</taxon>
        <taxon>Burkholderiales</taxon>
        <taxon>Burkholderiaceae</taxon>
        <taxon>Cupriavidus</taxon>
    </lineage>
</organism>
<sequence length="163" mass="18581">MLLAIKDFFNSLLLKELFKGMALTGRYLFARKITVQFPEEKTPMSPRFRGLHALRRYPNGEERCIACKLCEAVCPALAISIESDVRNDGTRRTTRYDIDLTKCIFCGFCEEACPVDAIVETHILEYHGEKRGDLYFTKDMLLAVGDRYEPQIAAAKAADAKYR</sequence>
<evidence type="ECO:0000255" key="1">
    <source>
        <dbReference type="HAMAP-Rule" id="MF_01351"/>
    </source>
</evidence>
<keyword id="KW-0004">4Fe-4S</keyword>
<keyword id="KW-0997">Cell inner membrane</keyword>
<keyword id="KW-1003">Cell membrane</keyword>
<keyword id="KW-0408">Iron</keyword>
<keyword id="KW-0411">Iron-sulfur</keyword>
<keyword id="KW-0472">Membrane</keyword>
<keyword id="KW-0479">Metal-binding</keyword>
<keyword id="KW-0520">NAD</keyword>
<keyword id="KW-0874">Quinone</keyword>
<keyword id="KW-1185">Reference proteome</keyword>
<keyword id="KW-0677">Repeat</keyword>
<keyword id="KW-1278">Translocase</keyword>
<keyword id="KW-0830">Ubiquinone</keyword>
<dbReference type="EC" id="7.1.1.-" evidence="1"/>
<dbReference type="EMBL" id="CP000352">
    <property type="protein sequence ID" value="ABF07821.1"/>
    <property type="molecule type" value="Genomic_DNA"/>
</dbReference>
<dbReference type="RefSeq" id="WP_008643353.1">
    <property type="nucleotide sequence ID" value="NC_007973.1"/>
</dbReference>
<dbReference type="SMR" id="Q1LPV5"/>
<dbReference type="STRING" id="266264.Rmet_0935"/>
<dbReference type="GeneID" id="60825422"/>
<dbReference type="KEGG" id="rme:Rmet_0935"/>
<dbReference type="eggNOG" id="COG1143">
    <property type="taxonomic scope" value="Bacteria"/>
</dbReference>
<dbReference type="HOGENOM" id="CLU_067218_5_1_4"/>
<dbReference type="Proteomes" id="UP000002429">
    <property type="component" value="Chromosome"/>
</dbReference>
<dbReference type="GO" id="GO:0005886">
    <property type="term" value="C:plasma membrane"/>
    <property type="evidence" value="ECO:0007669"/>
    <property type="project" value="UniProtKB-SubCell"/>
</dbReference>
<dbReference type="GO" id="GO:0051539">
    <property type="term" value="F:4 iron, 4 sulfur cluster binding"/>
    <property type="evidence" value="ECO:0007669"/>
    <property type="project" value="UniProtKB-KW"/>
</dbReference>
<dbReference type="GO" id="GO:0005506">
    <property type="term" value="F:iron ion binding"/>
    <property type="evidence" value="ECO:0007669"/>
    <property type="project" value="UniProtKB-UniRule"/>
</dbReference>
<dbReference type="GO" id="GO:0050136">
    <property type="term" value="F:NADH:ubiquinone reductase (non-electrogenic) activity"/>
    <property type="evidence" value="ECO:0007669"/>
    <property type="project" value="UniProtKB-UniRule"/>
</dbReference>
<dbReference type="GO" id="GO:0048038">
    <property type="term" value="F:quinone binding"/>
    <property type="evidence" value="ECO:0007669"/>
    <property type="project" value="UniProtKB-KW"/>
</dbReference>
<dbReference type="GO" id="GO:0009060">
    <property type="term" value="P:aerobic respiration"/>
    <property type="evidence" value="ECO:0007669"/>
    <property type="project" value="TreeGrafter"/>
</dbReference>
<dbReference type="FunFam" id="3.30.70.3270:FF:000003">
    <property type="entry name" value="NADH-quinone oxidoreductase subunit I"/>
    <property type="match status" value="1"/>
</dbReference>
<dbReference type="Gene3D" id="3.30.70.3270">
    <property type="match status" value="1"/>
</dbReference>
<dbReference type="HAMAP" id="MF_01351">
    <property type="entry name" value="NDH1_NuoI"/>
    <property type="match status" value="1"/>
</dbReference>
<dbReference type="InterPro" id="IPR017896">
    <property type="entry name" value="4Fe4S_Fe-S-bd"/>
</dbReference>
<dbReference type="InterPro" id="IPR017900">
    <property type="entry name" value="4Fe4S_Fe_S_CS"/>
</dbReference>
<dbReference type="InterPro" id="IPR010226">
    <property type="entry name" value="NADH_quinone_OxRdtase_chainI"/>
</dbReference>
<dbReference type="NCBIfam" id="TIGR01971">
    <property type="entry name" value="NuoI"/>
    <property type="match status" value="1"/>
</dbReference>
<dbReference type="NCBIfam" id="NF004538">
    <property type="entry name" value="PRK05888.1-4"/>
    <property type="match status" value="1"/>
</dbReference>
<dbReference type="NCBIfam" id="NF004539">
    <property type="entry name" value="PRK05888.1-5"/>
    <property type="match status" value="1"/>
</dbReference>
<dbReference type="PANTHER" id="PTHR10849:SF20">
    <property type="entry name" value="NADH DEHYDROGENASE [UBIQUINONE] IRON-SULFUR PROTEIN 8, MITOCHONDRIAL"/>
    <property type="match status" value="1"/>
</dbReference>
<dbReference type="PANTHER" id="PTHR10849">
    <property type="entry name" value="NADH DEHYDROGENASE UBIQUINONE IRON-SULFUR PROTEIN 8, MITOCHONDRIAL"/>
    <property type="match status" value="1"/>
</dbReference>
<dbReference type="Pfam" id="PF12838">
    <property type="entry name" value="Fer4_7"/>
    <property type="match status" value="1"/>
</dbReference>
<dbReference type="SUPFAM" id="SSF54862">
    <property type="entry name" value="4Fe-4S ferredoxins"/>
    <property type="match status" value="1"/>
</dbReference>
<dbReference type="PROSITE" id="PS00198">
    <property type="entry name" value="4FE4S_FER_1"/>
    <property type="match status" value="2"/>
</dbReference>
<dbReference type="PROSITE" id="PS51379">
    <property type="entry name" value="4FE4S_FER_2"/>
    <property type="match status" value="2"/>
</dbReference>
<name>NUOI_CUPMC</name>
<accession>Q1LPV5</accession>
<proteinExistence type="inferred from homology"/>
<feature type="chain" id="PRO_0000250926" description="NADH-quinone oxidoreductase subunit I">
    <location>
        <begin position="1"/>
        <end position="163"/>
    </location>
</feature>
<feature type="domain" description="4Fe-4S ferredoxin-type 1" evidence="1">
    <location>
        <begin position="54"/>
        <end position="84"/>
    </location>
</feature>
<feature type="domain" description="4Fe-4S ferredoxin-type 2" evidence="1">
    <location>
        <begin position="94"/>
        <end position="123"/>
    </location>
</feature>
<feature type="binding site" evidence="1">
    <location>
        <position position="64"/>
    </location>
    <ligand>
        <name>[4Fe-4S] cluster</name>
        <dbReference type="ChEBI" id="CHEBI:49883"/>
        <label>1</label>
    </ligand>
</feature>
<feature type="binding site" evidence="1">
    <location>
        <position position="67"/>
    </location>
    <ligand>
        <name>[4Fe-4S] cluster</name>
        <dbReference type="ChEBI" id="CHEBI:49883"/>
        <label>1</label>
    </ligand>
</feature>
<feature type="binding site" evidence="1">
    <location>
        <position position="70"/>
    </location>
    <ligand>
        <name>[4Fe-4S] cluster</name>
        <dbReference type="ChEBI" id="CHEBI:49883"/>
        <label>1</label>
    </ligand>
</feature>
<feature type="binding site" evidence="1">
    <location>
        <position position="74"/>
    </location>
    <ligand>
        <name>[4Fe-4S] cluster</name>
        <dbReference type="ChEBI" id="CHEBI:49883"/>
        <label>2</label>
    </ligand>
</feature>
<feature type="binding site" evidence="1">
    <location>
        <position position="103"/>
    </location>
    <ligand>
        <name>[4Fe-4S] cluster</name>
        <dbReference type="ChEBI" id="CHEBI:49883"/>
        <label>2</label>
    </ligand>
</feature>
<feature type="binding site" evidence="1">
    <location>
        <position position="106"/>
    </location>
    <ligand>
        <name>[4Fe-4S] cluster</name>
        <dbReference type="ChEBI" id="CHEBI:49883"/>
        <label>2</label>
    </ligand>
</feature>
<feature type="binding site" evidence="1">
    <location>
        <position position="109"/>
    </location>
    <ligand>
        <name>[4Fe-4S] cluster</name>
        <dbReference type="ChEBI" id="CHEBI:49883"/>
        <label>2</label>
    </ligand>
</feature>
<feature type="binding site" evidence="1">
    <location>
        <position position="113"/>
    </location>
    <ligand>
        <name>[4Fe-4S] cluster</name>
        <dbReference type="ChEBI" id="CHEBI:49883"/>
        <label>1</label>
    </ligand>
</feature>